<sequence>MSWLDQITWTDDGLVPVIAQEWQSNDVLMFAWMNREALALTAQRGEAVYWSRSRGRLWHKGEESGHVQRVHEIRIDCDADVVLLKVEQLGHQPGIACHTGRHSCFFQLLKDGAWQSVEPVLKDPSSIYK</sequence>
<proteinExistence type="inferred from homology"/>
<protein>
    <recommendedName>
        <fullName evidence="1">Phosphoribosyl-AMP cyclohydrolase</fullName>
        <shortName evidence="1">PRA-CH</shortName>
        <ecNumber evidence="1">3.5.4.19</ecNumber>
    </recommendedName>
</protein>
<keyword id="KW-0028">Amino-acid biosynthesis</keyword>
<keyword id="KW-0963">Cytoplasm</keyword>
<keyword id="KW-0368">Histidine biosynthesis</keyword>
<keyword id="KW-0378">Hydrolase</keyword>
<keyword id="KW-0460">Magnesium</keyword>
<keyword id="KW-0479">Metal-binding</keyword>
<keyword id="KW-1185">Reference proteome</keyword>
<keyword id="KW-0862">Zinc</keyword>
<accession>B1XX97</accession>
<gene>
    <name evidence="1" type="primary">hisI</name>
    <name type="ordered locus">Lcho_1611</name>
</gene>
<name>HIS3_LEPCP</name>
<reference key="1">
    <citation type="submission" date="2008-03" db="EMBL/GenBank/DDBJ databases">
        <title>Complete sequence of Leptothrix cholodnii SP-6.</title>
        <authorList>
            <consortium name="US DOE Joint Genome Institute"/>
            <person name="Copeland A."/>
            <person name="Lucas S."/>
            <person name="Lapidus A."/>
            <person name="Glavina del Rio T."/>
            <person name="Dalin E."/>
            <person name="Tice H."/>
            <person name="Bruce D."/>
            <person name="Goodwin L."/>
            <person name="Pitluck S."/>
            <person name="Chertkov O."/>
            <person name="Brettin T."/>
            <person name="Detter J.C."/>
            <person name="Han C."/>
            <person name="Kuske C.R."/>
            <person name="Schmutz J."/>
            <person name="Larimer F."/>
            <person name="Land M."/>
            <person name="Hauser L."/>
            <person name="Kyrpides N."/>
            <person name="Lykidis A."/>
            <person name="Emerson D."/>
            <person name="Richardson P."/>
        </authorList>
    </citation>
    <scope>NUCLEOTIDE SEQUENCE [LARGE SCALE GENOMIC DNA]</scope>
    <source>
        <strain>ATCC 51168 / LMG 8142 / SP-6</strain>
    </source>
</reference>
<organism>
    <name type="scientific">Leptothrix cholodnii (strain ATCC 51168 / LMG 8142 / SP-6)</name>
    <name type="common">Leptothrix discophora (strain SP-6)</name>
    <dbReference type="NCBI Taxonomy" id="395495"/>
    <lineage>
        <taxon>Bacteria</taxon>
        <taxon>Pseudomonadati</taxon>
        <taxon>Pseudomonadota</taxon>
        <taxon>Betaproteobacteria</taxon>
        <taxon>Burkholderiales</taxon>
        <taxon>Sphaerotilaceae</taxon>
        <taxon>Leptothrix</taxon>
    </lineage>
</organism>
<dbReference type="EC" id="3.5.4.19" evidence="1"/>
<dbReference type="EMBL" id="CP001013">
    <property type="protein sequence ID" value="ACB33878.1"/>
    <property type="molecule type" value="Genomic_DNA"/>
</dbReference>
<dbReference type="RefSeq" id="WP_012346639.1">
    <property type="nucleotide sequence ID" value="NC_010524.1"/>
</dbReference>
<dbReference type="SMR" id="B1XX97"/>
<dbReference type="STRING" id="395495.Lcho_1611"/>
<dbReference type="KEGG" id="lch:Lcho_1611"/>
<dbReference type="eggNOG" id="COG0139">
    <property type="taxonomic scope" value="Bacteria"/>
</dbReference>
<dbReference type="HOGENOM" id="CLU_048577_5_0_4"/>
<dbReference type="OrthoDB" id="9795769at2"/>
<dbReference type="UniPathway" id="UPA00031">
    <property type="reaction ID" value="UER00008"/>
</dbReference>
<dbReference type="Proteomes" id="UP000001693">
    <property type="component" value="Chromosome"/>
</dbReference>
<dbReference type="GO" id="GO:0005737">
    <property type="term" value="C:cytoplasm"/>
    <property type="evidence" value="ECO:0007669"/>
    <property type="project" value="UniProtKB-SubCell"/>
</dbReference>
<dbReference type="GO" id="GO:0000287">
    <property type="term" value="F:magnesium ion binding"/>
    <property type="evidence" value="ECO:0007669"/>
    <property type="project" value="UniProtKB-UniRule"/>
</dbReference>
<dbReference type="GO" id="GO:0004635">
    <property type="term" value="F:phosphoribosyl-AMP cyclohydrolase activity"/>
    <property type="evidence" value="ECO:0007669"/>
    <property type="project" value="UniProtKB-UniRule"/>
</dbReference>
<dbReference type="GO" id="GO:0008270">
    <property type="term" value="F:zinc ion binding"/>
    <property type="evidence" value="ECO:0007669"/>
    <property type="project" value="UniProtKB-UniRule"/>
</dbReference>
<dbReference type="GO" id="GO:0000105">
    <property type="term" value="P:L-histidine biosynthetic process"/>
    <property type="evidence" value="ECO:0007669"/>
    <property type="project" value="UniProtKB-UniRule"/>
</dbReference>
<dbReference type="FunFam" id="3.10.20.810:FF:000001">
    <property type="entry name" value="Histidine biosynthesis bifunctional protein HisIE"/>
    <property type="match status" value="1"/>
</dbReference>
<dbReference type="Gene3D" id="3.10.20.810">
    <property type="entry name" value="Phosphoribosyl-AMP cyclohydrolase"/>
    <property type="match status" value="1"/>
</dbReference>
<dbReference type="HAMAP" id="MF_01021">
    <property type="entry name" value="HisI"/>
    <property type="match status" value="1"/>
</dbReference>
<dbReference type="InterPro" id="IPR026660">
    <property type="entry name" value="PRA-CH"/>
</dbReference>
<dbReference type="InterPro" id="IPR002496">
    <property type="entry name" value="PRib_AMP_CycHydrolase_dom"/>
</dbReference>
<dbReference type="InterPro" id="IPR038019">
    <property type="entry name" value="PRib_AMP_CycHydrolase_sf"/>
</dbReference>
<dbReference type="NCBIfam" id="NF000768">
    <property type="entry name" value="PRK00051.1"/>
    <property type="match status" value="1"/>
</dbReference>
<dbReference type="PANTHER" id="PTHR42945">
    <property type="entry name" value="HISTIDINE BIOSYNTHESIS BIFUNCTIONAL PROTEIN"/>
    <property type="match status" value="1"/>
</dbReference>
<dbReference type="PANTHER" id="PTHR42945:SF1">
    <property type="entry name" value="HISTIDINE BIOSYNTHESIS BIFUNCTIONAL PROTEIN HIS7"/>
    <property type="match status" value="1"/>
</dbReference>
<dbReference type="Pfam" id="PF01502">
    <property type="entry name" value="PRA-CH"/>
    <property type="match status" value="1"/>
</dbReference>
<dbReference type="SUPFAM" id="SSF141734">
    <property type="entry name" value="HisI-like"/>
    <property type="match status" value="1"/>
</dbReference>
<feature type="chain" id="PRO_1000135353" description="Phosphoribosyl-AMP cyclohydrolase">
    <location>
        <begin position="1"/>
        <end position="129"/>
    </location>
</feature>
<feature type="binding site" evidence="1">
    <location>
        <position position="76"/>
    </location>
    <ligand>
        <name>Mg(2+)</name>
        <dbReference type="ChEBI" id="CHEBI:18420"/>
    </ligand>
</feature>
<feature type="binding site" evidence="1">
    <location>
        <position position="77"/>
    </location>
    <ligand>
        <name>Zn(2+)</name>
        <dbReference type="ChEBI" id="CHEBI:29105"/>
        <note>ligand shared between dimeric partners</note>
    </ligand>
</feature>
<feature type="binding site" evidence="1">
    <location>
        <position position="78"/>
    </location>
    <ligand>
        <name>Mg(2+)</name>
        <dbReference type="ChEBI" id="CHEBI:18420"/>
    </ligand>
</feature>
<feature type="binding site" evidence="1">
    <location>
        <position position="80"/>
    </location>
    <ligand>
        <name>Mg(2+)</name>
        <dbReference type="ChEBI" id="CHEBI:18420"/>
    </ligand>
</feature>
<feature type="binding site" evidence="1">
    <location>
        <position position="97"/>
    </location>
    <ligand>
        <name>Zn(2+)</name>
        <dbReference type="ChEBI" id="CHEBI:29105"/>
        <note>ligand shared between dimeric partners</note>
    </ligand>
</feature>
<feature type="binding site" evidence="1">
    <location>
        <position position="104"/>
    </location>
    <ligand>
        <name>Zn(2+)</name>
        <dbReference type="ChEBI" id="CHEBI:29105"/>
        <note>ligand shared between dimeric partners</note>
    </ligand>
</feature>
<comment type="function">
    <text evidence="1">Catalyzes the hydrolysis of the adenine ring of phosphoribosyl-AMP.</text>
</comment>
<comment type="catalytic activity">
    <reaction evidence="1">
        <text>1-(5-phospho-beta-D-ribosyl)-5'-AMP + H2O = 1-(5-phospho-beta-D-ribosyl)-5-[(5-phospho-beta-D-ribosylamino)methylideneamino]imidazole-4-carboxamide</text>
        <dbReference type="Rhea" id="RHEA:20049"/>
        <dbReference type="ChEBI" id="CHEBI:15377"/>
        <dbReference type="ChEBI" id="CHEBI:58435"/>
        <dbReference type="ChEBI" id="CHEBI:59457"/>
        <dbReference type="EC" id="3.5.4.19"/>
    </reaction>
</comment>
<comment type="cofactor">
    <cofactor evidence="1">
        <name>Mg(2+)</name>
        <dbReference type="ChEBI" id="CHEBI:18420"/>
    </cofactor>
    <text evidence="1">Binds 1 Mg(2+) ion per subunit.</text>
</comment>
<comment type="cofactor">
    <cofactor evidence="1">
        <name>Zn(2+)</name>
        <dbReference type="ChEBI" id="CHEBI:29105"/>
    </cofactor>
    <text evidence="1">Binds 1 zinc ion per subunit.</text>
</comment>
<comment type="pathway">
    <text evidence="1">Amino-acid biosynthesis; L-histidine biosynthesis; L-histidine from 5-phospho-alpha-D-ribose 1-diphosphate: step 3/9.</text>
</comment>
<comment type="subunit">
    <text evidence="1">Homodimer.</text>
</comment>
<comment type="subcellular location">
    <subcellularLocation>
        <location evidence="1">Cytoplasm</location>
    </subcellularLocation>
</comment>
<comment type="similarity">
    <text evidence="1">Belongs to the PRA-CH family.</text>
</comment>
<evidence type="ECO:0000255" key="1">
    <source>
        <dbReference type="HAMAP-Rule" id="MF_01021"/>
    </source>
</evidence>